<comment type="function">
    <text evidence="1">Capsid protein (CA) is the structural component of the virus-like particle (VLP), forming the shell that encapsulates the retrotransposons dimeric RNA genome. The particles are assembled from trimer-clustered units and there are holes in the capsid shells that allow for the diffusion of macromolecules. CA also has nucleocapsid-like chaperone activity, promoting primer tRNA(i)-Met annealing to the multipartite primer-binding site (PBS), dimerization of Ty1 RNA and initiation of reverse transcription (By similarity).</text>
</comment>
<comment type="function">
    <text evidence="1">The aspartyl protease (PR) mediates the proteolytic cleavages of the Gag and Gag-Pol polyproteins after assembly of the VLP.</text>
</comment>
<comment type="function">
    <text evidence="1">Reverse transcriptase/ribonuclease H (RT) is a multifunctional enzyme that catalyzes the conversion of the retro-elements RNA genome into dsDNA within the VLP. The enzyme displays a DNA polymerase activity that can copy either DNA or RNA templates, and a ribonuclease H (RNase H) activity that cleaves the RNA strand of RNA-DNA heteroduplexes during plus-strand synthesis and hydrolyzes RNA primers. The conversion leads to a linear dsDNA copy of the retrotransposon that includes long terminal repeats (LTRs) at both ends (By similarity).</text>
</comment>
<comment type="function">
    <text evidence="1">Integrase (IN) targets the VLP to the nucleus, where a subparticle preintegration complex (PIC) containing at least integrase and the newly synthesized dsDNA copy of the retrotransposon must transit the nuclear membrane. Once in the nucleus, integrase performs the integration of the dsDNA into the host genome (By similarity).</text>
</comment>
<comment type="catalytic activity">
    <reaction>
        <text>DNA(n) + a 2'-deoxyribonucleoside 5'-triphosphate = DNA(n+1) + diphosphate</text>
        <dbReference type="Rhea" id="RHEA:22508"/>
        <dbReference type="Rhea" id="RHEA-COMP:17339"/>
        <dbReference type="Rhea" id="RHEA-COMP:17340"/>
        <dbReference type="ChEBI" id="CHEBI:33019"/>
        <dbReference type="ChEBI" id="CHEBI:61560"/>
        <dbReference type="ChEBI" id="CHEBI:173112"/>
        <dbReference type="EC" id="2.7.7.49"/>
    </reaction>
</comment>
<comment type="catalytic activity">
    <reaction>
        <text>DNA(n) + a 2'-deoxyribonucleoside 5'-triphosphate = DNA(n+1) + diphosphate</text>
        <dbReference type="Rhea" id="RHEA:22508"/>
        <dbReference type="Rhea" id="RHEA-COMP:17339"/>
        <dbReference type="Rhea" id="RHEA-COMP:17340"/>
        <dbReference type="ChEBI" id="CHEBI:33019"/>
        <dbReference type="ChEBI" id="CHEBI:61560"/>
        <dbReference type="ChEBI" id="CHEBI:173112"/>
        <dbReference type="EC" id="2.7.7.7"/>
    </reaction>
</comment>
<comment type="catalytic activity">
    <reaction>
        <text>Endonucleolytic cleavage to 5'-phosphomonoester.</text>
        <dbReference type="EC" id="3.1.26.4"/>
    </reaction>
</comment>
<comment type="subunit">
    <text evidence="1">The capsid protein forms a homotrimer, from which the VLPs are assembled. The protease is a homodimer, whose active site consists of two apposed aspartic acid residues (By similarity).</text>
</comment>
<comment type="subcellular location">
    <subcellularLocation>
        <location>Cytoplasm</location>
    </subcellularLocation>
    <subcellularLocation>
        <location evidence="1">Nucleus</location>
    </subcellularLocation>
</comment>
<comment type="alternative products">
    <event type="ribosomal frameshifting"/>
    <isoform>
        <id>P0C2I3-1</id>
        <name>Transposon Ty1-DR6 Gag-Pol polyprotein</name>
        <sequence type="displayed"/>
    </isoform>
    <isoform>
        <id>P0CX70-1</id>
        <name>Transposon Ty1-DR6 Gag polyprotein</name>
        <sequence type="external"/>
    </isoform>
    <text evidence="1">The Gag-Pol polyprotein is generated by a +1 ribosomal frameshift. The ratio of Gag:Gag-Pol varies between 20:1 and 5:1 (By similarity).</text>
</comment>
<comment type="domain">
    <text evidence="1">The C-terminal RNA-binding region of CA is sufficient for all its nucleocapsid-like chaperone activities.</text>
</comment>
<comment type="domain">
    <text evidence="1">Integrase core domain contains the D-x(n)-D-x(35)-E motif, named for the phylogenetically conserved glutamic acid and aspartic acid residues and the invariant 35 amino acid spacing between the second and third acidic residues. Each acidic residue of the D,D(35)E motif is independently essential for the 3'-processing and strand transfer activities of purified integrase protein (By similarity).</text>
</comment>
<comment type="PTM">
    <text evidence="1">Initially, virus-like particles (VLPs) are composed of the structural unprocessed proteins Gag and Gag-Pol, and also contain the host initiator methionine tRNA (tRNA(i)-Met) which serves as a primer for minus-strand DNA synthesis, and a dimer of genomic Ty RNA. Processing of the polyproteins occurs within the particle and proceeds by an ordered pathway, called maturation. First, the protease (PR) is released by autocatalytic cleavage of the Gag-Pol polyprotein yielding capsid protein p45 and a Pol-p154 precursor protein. This cleavage is a prerequisite for subsequent processing of Pol-p154 at the remaining sites to release the mature structural and catalytic proteins. Maturation takes place prior to the RT reaction and is required to produce transposition-competent VLPs (By similarity).</text>
</comment>
<comment type="miscellaneous">
    <text>Retrotransposons are mobile genetic entities that are able to replicate via an RNA intermediate and a reverse transcription step. In contrast to retroviruses, retrotransposons are non-infectious, lack an envelope and remain intracellular. Ty1 retrotransposons belong to the copia elements (pseudoviridae).</text>
</comment>
<comment type="miscellaneous">
    <molecule>Isoform Transposon Ty1-DR6 Gag-Pol polyprotein</molecule>
    <text>Produced by +1 ribosomal frameshifting between codon Leu-435 and Gly-436 of the YDR365W-A ORF.</text>
</comment>
<accession>P0C2I3</accession>
<accession>D6VSZ5</accession>
<protein>
    <recommendedName>
        <fullName>Transposon Ty1-DR6 Gag-Pol polyprotein</fullName>
    </recommendedName>
    <alternativeName>
        <fullName>Gag-Pol-p199</fullName>
    </alternativeName>
    <alternativeName>
        <fullName>TY1A-TY1B</fullName>
    </alternativeName>
    <alternativeName>
        <fullName>Transposon Ty1 TYA-TYB polyprotein</fullName>
    </alternativeName>
    <alternativeName>
        <fullName>p190</fullName>
    </alternativeName>
    <component>
        <recommendedName>
            <fullName>Capsid protein</fullName>
            <shortName>CA</shortName>
        </recommendedName>
        <alternativeName>
            <fullName>Gag-p45</fullName>
        </alternativeName>
        <alternativeName>
            <fullName>p54</fullName>
        </alternativeName>
    </component>
    <component>
        <recommendedName>
            <fullName>Ty1 protease</fullName>
            <shortName>PR</shortName>
            <ecNumber>3.4.23.-</ecNumber>
        </recommendedName>
        <alternativeName>
            <fullName>Pol-p20</fullName>
        </alternativeName>
        <alternativeName>
            <fullName>p23</fullName>
        </alternativeName>
    </component>
    <component>
        <recommendedName>
            <fullName>Integrase</fullName>
            <shortName>IN</shortName>
        </recommendedName>
        <alternativeName>
            <fullName>Pol-p71</fullName>
        </alternativeName>
        <alternativeName>
            <fullName>p84</fullName>
        </alternativeName>
        <alternativeName>
            <fullName>p90</fullName>
        </alternativeName>
    </component>
    <component>
        <recommendedName>
            <fullName>Reverse transcriptase/ribonuclease H</fullName>
            <shortName>RT</shortName>
            <shortName>RT-RH</shortName>
            <ecNumber>2.7.7.49</ecNumber>
            <ecNumber>2.7.7.7</ecNumber>
            <ecNumber>3.1.26.4</ecNumber>
        </recommendedName>
        <alternativeName>
            <fullName>Pol-p63</fullName>
        </alternativeName>
        <alternativeName>
            <fullName>p60</fullName>
        </alternativeName>
    </component>
</protein>
<dbReference type="EC" id="3.4.23.-"/>
<dbReference type="EC" id="2.7.7.49"/>
<dbReference type="EC" id="2.7.7.7"/>
<dbReference type="EC" id="3.1.26.4"/>
<dbReference type="EMBL" id="U28373">
    <property type="status" value="NOT_ANNOTATED_CDS"/>
    <property type="molecule type" value="Genomic_DNA"/>
</dbReference>
<dbReference type="EMBL" id="BK006938">
    <property type="protein sequence ID" value="DAA12205.1"/>
    <property type="molecule type" value="Genomic_DNA"/>
</dbReference>
<dbReference type="PIR" id="S69957">
    <property type="entry name" value="S69957"/>
</dbReference>
<dbReference type="RefSeq" id="NP_058152.1">
    <molecule id="P0C2I3-1"/>
    <property type="nucleotide sequence ID" value="NM_001184427.2"/>
</dbReference>
<dbReference type="SMR" id="P0C2I3"/>
<dbReference type="BioGRID" id="32424">
    <property type="interactions" value="6"/>
</dbReference>
<dbReference type="FunCoup" id="P0C2I3">
    <property type="interactions" value="172"/>
</dbReference>
<dbReference type="GlyGen" id="P0C2I3">
    <property type="glycosylation" value="3 sites"/>
</dbReference>
<dbReference type="iPTMnet" id="P0C2I3"/>
<dbReference type="PaxDb" id="4932-YDR365W-B"/>
<dbReference type="PeptideAtlas" id="P0C2I3"/>
<dbReference type="GeneID" id="851971"/>
<dbReference type="KEGG" id="sce:YDR365W-B"/>
<dbReference type="AGR" id="SGD:S000007401"/>
<dbReference type="SGD" id="S000007401">
    <property type="gene designation" value="YDR365W-B"/>
</dbReference>
<dbReference type="VEuPathDB" id="FungiDB:YDR365W-B"/>
<dbReference type="eggNOG" id="KOG0017">
    <property type="taxonomic scope" value="Eukaryota"/>
</dbReference>
<dbReference type="HOGENOM" id="CLU_244151_0_0_1"/>
<dbReference type="InParanoid" id="P0C2I3"/>
<dbReference type="OrthoDB" id="5423336at2759"/>
<dbReference type="ChiTaRS" id="YDR365W-B">
    <property type="organism name" value="yeast"/>
</dbReference>
<dbReference type="Proteomes" id="UP000002311">
    <property type="component" value="Chromosome IV"/>
</dbReference>
<dbReference type="RNAct" id="P0C2I3">
    <property type="molecule type" value="protein"/>
</dbReference>
<dbReference type="GO" id="GO:0005737">
    <property type="term" value="C:cytoplasm"/>
    <property type="evidence" value="ECO:0007669"/>
    <property type="project" value="UniProtKB-SubCell"/>
</dbReference>
<dbReference type="GO" id="GO:0005634">
    <property type="term" value="C:nucleus"/>
    <property type="evidence" value="ECO:0000314"/>
    <property type="project" value="SGD"/>
</dbReference>
<dbReference type="GO" id="GO:0004190">
    <property type="term" value="F:aspartic-type endopeptidase activity"/>
    <property type="evidence" value="ECO:0007669"/>
    <property type="project" value="UniProtKB-KW"/>
</dbReference>
<dbReference type="GO" id="GO:0005524">
    <property type="term" value="F:ATP binding"/>
    <property type="evidence" value="ECO:0007669"/>
    <property type="project" value="UniProtKB-KW"/>
</dbReference>
<dbReference type="GO" id="GO:0003677">
    <property type="term" value="F:DNA binding"/>
    <property type="evidence" value="ECO:0007669"/>
    <property type="project" value="UniProtKB-KW"/>
</dbReference>
<dbReference type="GO" id="GO:0003887">
    <property type="term" value="F:DNA-directed DNA polymerase activity"/>
    <property type="evidence" value="ECO:0007669"/>
    <property type="project" value="UniProtKB-KW"/>
</dbReference>
<dbReference type="GO" id="GO:0003723">
    <property type="term" value="F:RNA binding"/>
    <property type="evidence" value="ECO:0007669"/>
    <property type="project" value="UniProtKB-KW"/>
</dbReference>
<dbReference type="GO" id="GO:0003964">
    <property type="term" value="F:RNA-directed DNA polymerase activity"/>
    <property type="evidence" value="ECO:0007669"/>
    <property type="project" value="UniProtKB-KW"/>
</dbReference>
<dbReference type="GO" id="GO:0004523">
    <property type="term" value="F:RNA-DNA hybrid ribonuclease activity"/>
    <property type="evidence" value="ECO:0007669"/>
    <property type="project" value="UniProtKB-EC"/>
</dbReference>
<dbReference type="GO" id="GO:0008270">
    <property type="term" value="F:zinc ion binding"/>
    <property type="evidence" value="ECO:0007669"/>
    <property type="project" value="UniProtKB-KW"/>
</dbReference>
<dbReference type="GO" id="GO:0015074">
    <property type="term" value="P:DNA integration"/>
    <property type="evidence" value="ECO:0007669"/>
    <property type="project" value="UniProtKB-KW"/>
</dbReference>
<dbReference type="GO" id="GO:0006310">
    <property type="term" value="P:DNA recombination"/>
    <property type="evidence" value="ECO:0007669"/>
    <property type="project" value="UniProtKB-KW"/>
</dbReference>
<dbReference type="GO" id="GO:0006508">
    <property type="term" value="P:proteolysis"/>
    <property type="evidence" value="ECO:0007669"/>
    <property type="project" value="UniProtKB-KW"/>
</dbReference>
<dbReference type="GO" id="GO:0032196">
    <property type="term" value="P:transposition"/>
    <property type="evidence" value="ECO:0007669"/>
    <property type="project" value="UniProtKB-KW"/>
</dbReference>
<dbReference type="GO" id="GO:0075523">
    <property type="term" value="P:viral translational frameshifting"/>
    <property type="evidence" value="ECO:0007669"/>
    <property type="project" value="UniProtKB-KW"/>
</dbReference>
<dbReference type="CDD" id="cd09272">
    <property type="entry name" value="RNase_HI_RT_Ty1"/>
    <property type="match status" value="1"/>
</dbReference>
<dbReference type="FunFam" id="3.30.420.10:FF:000050">
    <property type="entry name" value="Transposon Ty2-DR3 Gag-Pol polyprotein"/>
    <property type="match status" value="1"/>
</dbReference>
<dbReference type="Gene3D" id="3.30.420.10">
    <property type="entry name" value="Ribonuclease H-like superfamily/Ribonuclease H"/>
    <property type="match status" value="1"/>
</dbReference>
<dbReference type="InterPro" id="IPR001969">
    <property type="entry name" value="Aspartic_peptidase_AS"/>
</dbReference>
<dbReference type="InterPro" id="IPR043502">
    <property type="entry name" value="DNA/RNA_pol_sf"/>
</dbReference>
<dbReference type="InterPro" id="IPR001584">
    <property type="entry name" value="Integrase_cat-core"/>
</dbReference>
<dbReference type="InterPro" id="IPR039537">
    <property type="entry name" value="Retrotran_Ty1/copia-like"/>
</dbReference>
<dbReference type="InterPro" id="IPR012337">
    <property type="entry name" value="RNaseH-like_sf"/>
</dbReference>
<dbReference type="InterPro" id="IPR036397">
    <property type="entry name" value="RNaseH_sf"/>
</dbReference>
<dbReference type="InterPro" id="IPR013103">
    <property type="entry name" value="RVT_2"/>
</dbReference>
<dbReference type="InterPro" id="IPR015820">
    <property type="entry name" value="TYA"/>
</dbReference>
<dbReference type="PANTHER" id="PTHR42648">
    <property type="entry name" value="TRANSPOSASE, PUTATIVE-RELATED"/>
    <property type="match status" value="1"/>
</dbReference>
<dbReference type="PANTHER" id="PTHR42648:SF11">
    <property type="entry name" value="TRANSPOSON TY4-P GAG-POL POLYPROTEIN"/>
    <property type="match status" value="1"/>
</dbReference>
<dbReference type="Pfam" id="PF00665">
    <property type="entry name" value="rve"/>
    <property type="match status" value="1"/>
</dbReference>
<dbReference type="Pfam" id="PF07727">
    <property type="entry name" value="RVT_2"/>
    <property type="match status" value="1"/>
</dbReference>
<dbReference type="Pfam" id="PF01021">
    <property type="entry name" value="TYA"/>
    <property type="match status" value="1"/>
</dbReference>
<dbReference type="SUPFAM" id="SSF56672">
    <property type="entry name" value="DNA/RNA polymerases"/>
    <property type="match status" value="1"/>
</dbReference>
<dbReference type="SUPFAM" id="SSF53098">
    <property type="entry name" value="Ribonuclease H-like"/>
    <property type="match status" value="1"/>
</dbReference>
<dbReference type="PROSITE" id="PS00141">
    <property type="entry name" value="ASP_PROTEASE"/>
    <property type="match status" value="1"/>
</dbReference>
<dbReference type="PROSITE" id="PS50994">
    <property type="entry name" value="INTEGRASE"/>
    <property type="match status" value="1"/>
</dbReference>
<sequence length="1755" mass="198659">MESQQLSQHSPISHGSACASVTSKEVHTNQDPLDVSASKTEECEKASTKANSQQTTTPASSAVPENPHHASPQPASVPPPQNGPYPQQCMMTQNQANPSGWSFYGHPSMIPYTPYQMSPMYFPPGPQSQFPQYPSSVGTPLSTPSPESGNTFTDSSSADSDMTSTKKYVRPPPMLTSPNDFPNWVKTYIKFLQNSNLGGIIPTVNGKPVRQITDDELTFLYNTFQIFAPSQFLPTWVKDILSVDYTDIMKILSKSIEKMQSDTQEANDIVTLANLQYNGSTPADAFETKVTNIIDRLNNNGIHINNKVACQLIMRGLSGEYKFLRYTRHRHLNMTVAELFLDIHAIYEEQQGSRNSKPNYRRNLSDEKNDSRSYTNTTKPKVIARNPQKTNNSKSKTARAHNVSTSNNSPSTDNDSISKSTTEPIQLNNKHDLHLGQELTESTVNHTNHSDDELPGHLLLDSGASRTLIRSAHHIHSASSNPDINVVDAQKRNIPINAIGDLQFHFQDNTKTSIKVLHTPNIAYDLLSLNELAAVDITACFTKNVLERSDGTVLAPIVQYGDFYWVSKRYLLPSNISVPTINNVHTSESTRKYPYPFIHRMLAHANAQTIRYSLKNNTITYFNESDVDWSSAIDYQCPDCLIGKSTKHRHIKGSRLKYQNSYEPFQYLHTDIFGPVHNLPNSAPSYFISFTDETTKFRWVYPLHDRREDSILDVFTTILAFIKNQFQASVLVIQMDRGSEYTNRTLHKFLEKNGITPCYTTTADSRAHGVAERLNRTLLDDCRTQLQCSGLPNYLWFSAIEFSTIVRNSLASPKSKKSARQHAGLAGLDISTLLPFGQPVIVNDHNPNSKIHPRGIPGYALHPSRNSYGYIIYLPSLKKTVDTTNYVILQGKESRLDQFNYDALTFDEDLNRLTASYHSFIASNEIQESNDLNIESDHDFQSDIELHPEQPRNVLSKAVSPTDSTPPSTHTEDSKRVSKTNIRAPREVDPNISESNILPSKKRSSTPQISNIESTGSGGMHKLNVPLLAPMSQSNTHESSHASKSKDFRHSDSYSENETNHTNVPISSTGGTNNKTVPQISDQETEKRIIHRSPSIDASPPENNSSHNIVPIKTPTTVSEQNTEESIIADLPLPDLPPESPTEFPDPFKELPPINSRQTNSSLGGIGDSNAYTTINSKKRSLEDNETEIKVSRDTWNTKNMRSLEPPRSKKRIHLIAAVKAVKSIKPIRTTLRYDEAITYNKDIKEKEKYIEAYHKEVNQLLKMKTWDTDEYYDRKEIDPKRVINSMFIFNKKRDGTHKARFVARGDIQHPDTYDSGMQSNTVHHYALMTSLSLALDNNYYITQLDISSAYLYADIKEELYIRPPPHLGMNDKLIRLKKSLYGLKQSGANWYETIKSYLIQQCGMEEVRGWSCVFKNSQVTICLFVDDMVLFSKNLNSNKRIIEKLKMQYDTKIINLGESDEEIQYDILGLEIKYQRGKYMKLGMENSLTEKIPKLNVPLNPKGRKLSAPGQPGLYIDQDELEIDEDEYKEKVHEMQKLIGLASYVGYKFRFDLLYYINTLAQHILFPSRQVLDMTYELIQFMWDTRDKQLIWHKNKPTKPDNKLVAISDASYGNQPYYKSQIGNIFLLNGKVIGGKSTKASLTCTSTTEAEIHAVSEAIPLLNNLSHLVQELNKKPIIKGLLTDSRSTISIIKSTNEEKFRNRFFGTKAMRLRDEVSGNNLYVYYIETKKNIADVMTKPLPIKTFKLLTNKWIH</sequence>
<keyword id="KW-0064">Aspartyl protease</keyword>
<keyword id="KW-0067">ATP-binding</keyword>
<keyword id="KW-0963">Cytoplasm</keyword>
<keyword id="KW-0229">DNA integration</keyword>
<keyword id="KW-0233">DNA recombination</keyword>
<keyword id="KW-0238">DNA-binding</keyword>
<keyword id="KW-0239">DNA-directed DNA polymerase</keyword>
<keyword id="KW-0255">Endonuclease</keyword>
<keyword id="KW-0378">Hydrolase</keyword>
<keyword id="KW-0460">Magnesium</keyword>
<keyword id="KW-0479">Metal-binding</keyword>
<keyword id="KW-0511">Multifunctional enzyme</keyword>
<keyword id="KW-0540">Nuclease</keyword>
<keyword id="KW-0547">Nucleotide-binding</keyword>
<keyword id="KW-0548">Nucleotidyltransferase</keyword>
<keyword id="KW-0539">Nucleus</keyword>
<keyword id="KW-0597">Phosphoprotein</keyword>
<keyword id="KW-0645">Protease</keyword>
<keyword id="KW-1185">Reference proteome</keyword>
<keyword id="KW-0688">Ribosomal frameshifting</keyword>
<keyword id="KW-0694">RNA-binding</keyword>
<keyword id="KW-0695">RNA-directed DNA polymerase</keyword>
<keyword id="KW-0808">Transferase</keyword>
<keyword id="KW-0814">Transposable element</keyword>
<keyword id="KW-0815">Transposition</keyword>
<keyword id="KW-1188">Viral release from host cell</keyword>
<keyword id="KW-0917">Virion maturation</keyword>
<keyword id="KW-0862">Zinc</keyword>
<keyword id="KW-0863">Zinc-finger</keyword>
<evidence type="ECO:0000250" key="1"/>
<evidence type="ECO:0000250" key="2">
    <source>
        <dbReference type="UniProtKB" id="Q99231"/>
    </source>
</evidence>
<evidence type="ECO:0000255" key="3">
    <source>
        <dbReference type="PROSITE-ProRule" id="PRU00457"/>
    </source>
</evidence>
<evidence type="ECO:0000255" key="4">
    <source>
        <dbReference type="PROSITE-ProRule" id="PRU10094"/>
    </source>
</evidence>
<evidence type="ECO:0000256" key="5">
    <source>
        <dbReference type="SAM" id="MobiDB-lite"/>
    </source>
</evidence>
<organism>
    <name type="scientific">Saccharomyces cerevisiae (strain ATCC 204508 / S288c)</name>
    <name type="common">Baker's yeast</name>
    <dbReference type="NCBI Taxonomy" id="559292"/>
    <lineage>
        <taxon>Eukaryota</taxon>
        <taxon>Fungi</taxon>
        <taxon>Dikarya</taxon>
        <taxon>Ascomycota</taxon>
        <taxon>Saccharomycotina</taxon>
        <taxon>Saccharomycetes</taxon>
        <taxon>Saccharomycetales</taxon>
        <taxon>Saccharomycetaceae</taxon>
        <taxon>Saccharomyces</taxon>
    </lineage>
</organism>
<feature type="chain" id="PRO_0000279032" description="Transposon Ty1-DR6 Gag-Pol polyprotein">
    <location>
        <begin position="1"/>
        <end position="1755"/>
    </location>
</feature>
<feature type="chain" id="PRO_0000279033" description="Capsid protein" evidence="1">
    <location>
        <begin position="1"/>
        <end position="401"/>
    </location>
</feature>
<feature type="chain" id="PRO_0000279034" description="Ty1 protease" evidence="1">
    <location>
        <begin position="402"/>
        <end position="582"/>
    </location>
</feature>
<feature type="chain" id="PRO_0000279035" description="Integrase" evidence="1">
    <location>
        <begin position="583"/>
        <end position="1217"/>
    </location>
</feature>
<feature type="chain" id="PRO_0000279036" description="Reverse transcriptase/ribonuclease H" evidence="1">
    <location>
        <begin position="1218"/>
        <end position="1755"/>
    </location>
</feature>
<feature type="domain" description="Integrase catalytic" evidence="3">
    <location>
        <begin position="660"/>
        <end position="835"/>
    </location>
</feature>
<feature type="domain" description="Reverse transcriptase Ty1/copia-type">
    <location>
        <begin position="1338"/>
        <end position="1476"/>
    </location>
</feature>
<feature type="domain" description="RNase H Ty1/copia-type">
    <location>
        <begin position="1610"/>
        <end position="1752"/>
    </location>
</feature>
<feature type="region of interest" description="Disordered" evidence="5">
    <location>
        <begin position="1"/>
        <end position="93"/>
    </location>
</feature>
<feature type="region of interest" description="Disordered" evidence="5">
    <location>
        <begin position="126"/>
        <end position="174"/>
    </location>
</feature>
<feature type="region of interest" description="RNA-binding" evidence="1">
    <location>
        <begin position="299"/>
        <end position="401"/>
    </location>
</feature>
<feature type="region of interest" description="Disordered" evidence="5">
    <location>
        <begin position="352"/>
        <end position="421"/>
    </location>
</feature>
<feature type="region of interest" description="Integrase-type zinc finger-like">
    <location>
        <begin position="583"/>
        <end position="640"/>
    </location>
</feature>
<feature type="region of interest" description="Disordered" evidence="5">
    <location>
        <begin position="956"/>
        <end position="1087"/>
    </location>
</feature>
<feature type="region of interest" description="Disordered" evidence="5">
    <location>
        <begin position="1092"/>
        <end position="1111"/>
    </location>
</feature>
<feature type="region of interest" description="Disordered" evidence="5">
    <location>
        <begin position="1130"/>
        <end position="1187"/>
    </location>
</feature>
<feature type="short sequence motif" description="Bipartite nuclear localization signal" evidence="1">
    <location>
        <begin position="1178"/>
        <end position="1212"/>
    </location>
</feature>
<feature type="compositionally biased region" description="Polar residues" evidence="5">
    <location>
        <begin position="1"/>
        <end position="23"/>
    </location>
</feature>
<feature type="compositionally biased region" description="Polar residues" evidence="5">
    <location>
        <begin position="48"/>
        <end position="60"/>
    </location>
</feature>
<feature type="compositionally biased region" description="Polar residues" evidence="5">
    <location>
        <begin position="127"/>
        <end position="152"/>
    </location>
</feature>
<feature type="compositionally biased region" description="Low complexity" evidence="5">
    <location>
        <begin position="153"/>
        <end position="165"/>
    </location>
</feature>
<feature type="compositionally biased region" description="Low complexity" evidence="5">
    <location>
        <begin position="402"/>
        <end position="418"/>
    </location>
</feature>
<feature type="compositionally biased region" description="Low complexity" evidence="5">
    <location>
        <begin position="960"/>
        <end position="969"/>
    </location>
</feature>
<feature type="compositionally biased region" description="Polar residues" evidence="5">
    <location>
        <begin position="1005"/>
        <end position="1015"/>
    </location>
</feature>
<feature type="compositionally biased region" description="Basic and acidic residues" evidence="5">
    <location>
        <begin position="1038"/>
        <end position="1053"/>
    </location>
</feature>
<feature type="compositionally biased region" description="Polar residues" evidence="5">
    <location>
        <begin position="1054"/>
        <end position="1082"/>
    </location>
</feature>
<feature type="compositionally biased region" description="Polar residues" evidence="5">
    <location>
        <begin position="1101"/>
        <end position="1111"/>
    </location>
</feature>
<feature type="active site" description="For protease activity; shared with dimeric partner" evidence="4">
    <location>
        <position position="461"/>
    </location>
</feature>
<feature type="binding site" evidence="3">
    <location>
        <position position="671"/>
    </location>
    <ligand>
        <name>Mg(2+)</name>
        <dbReference type="ChEBI" id="CHEBI:18420"/>
        <label>1</label>
        <note>catalytic; for integrase activity</note>
    </ligand>
</feature>
<feature type="binding site" evidence="3">
    <location>
        <position position="736"/>
    </location>
    <ligand>
        <name>Mg(2+)</name>
        <dbReference type="ChEBI" id="CHEBI:18420"/>
        <label>1</label>
        <note>catalytic; for integrase activity</note>
    </ligand>
</feature>
<feature type="binding site" evidence="3">
    <location>
        <position position="1346"/>
    </location>
    <ligand>
        <name>Mg(2+)</name>
        <dbReference type="ChEBI" id="CHEBI:18420"/>
        <label>2</label>
        <note>catalytic; for reverse transcriptase activity</note>
    </ligand>
</feature>
<feature type="binding site" evidence="3">
    <location>
        <position position="1427"/>
    </location>
    <ligand>
        <name>Mg(2+)</name>
        <dbReference type="ChEBI" id="CHEBI:18420"/>
        <label>2</label>
        <note>catalytic; for reverse transcriptase activity</note>
    </ligand>
</feature>
<feature type="binding site" evidence="3">
    <location>
        <position position="1428"/>
    </location>
    <ligand>
        <name>Mg(2+)</name>
        <dbReference type="ChEBI" id="CHEBI:18420"/>
        <label>2</label>
        <note>catalytic; for reverse transcriptase activity</note>
    </ligand>
</feature>
<feature type="binding site" evidence="3">
    <location>
        <position position="1610"/>
    </location>
    <ligand>
        <name>Mg(2+)</name>
        <dbReference type="ChEBI" id="CHEBI:18420"/>
        <label>3</label>
        <note>catalytic; for RNase H activity</note>
    </ligand>
</feature>
<feature type="binding site" evidence="3">
    <location>
        <position position="1652"/>
    </location>
    <ligand>
        <name>Mg(2+)</name>
        <dbReference type="ChEBI" id="CHEBI:18420"/>
        <label>3</label>
        <note>catalytic; for RNase H activity</note>
    </ligand>
</feature>
<feature type="binding site" evidence="3">
    <location>
        <position position="1685"/>
    </location>
    <ligand>
        <name>Mg(2+)</name>
        <dbReference type="ChEBI" id="CHEBI:18420"/>
        <label>3</label>
        <note>catalytic; for RNase H activity</note>
    </ligand>
</feature>
<feature type="site" description="Cleavage; by Ty1 protease" evidence="1">
    <location>
        <begin position="401"/>
        <end position="402"/>
    </location>
</feature>
<feature type="site" description="Cleavage; by Ty1 protease" evidence="1">
    <location>
        <begin position="582"/>
        <end position="583"/>
    </location>
</feature>
<feature type="site" description="Cleavage; by Ty1 protease" evidence="1">
    <location>
        <begin position="1217"/>
        <end position="1218"/>
    </location>
</feature>
<feature type="modified residue" description="Phosphoserine" evidence="2">
    <location>
        <position position="416"/>
    </location>
</feature>
<reference key="1">
    <citation type="journal article" date="1997" name="Nature">
        <title>The nucleotide sequence of Saccharomyces cerevisiae chromosome IV.</title>
        <authorList>
            <person name="Jacq C."/>
            <person name="Alt-Moerbe J."/>
            <person name="Andre B."/>
            <person name="Arnold W."/>
            <person name="Bahr A."/>
            <person name="Ballesta J.P.G."/>
            <person name="Bargues M."/>
            <person name="Baron L."/>
            <person name="Becker A."/>
            <person name="Biteau N."/>
            <person name="Bloecker H."/>
            <person name="Blugeon C."/>
            <person name="Boskovic J."/>
            <person name="Brandt P."/>
            <person name="Brueckner M."/>
            <person name="Buitrago M.J."/>
            <person name="Coster F."/>
            <person name="Delaveau T."/>
            <person name="del Rey F."/>
            <person name="Dujon B."/>
            <person name="Eide L.G."/>
            <person name="Garcia-Cantalejo J.M."/>
            <person name="Goffeau A."/>
            <person name="Gomez-Peris A."/>
            <person name="Granotier C."/>
            <person name="Hanemann V."/>
            <person name="Hankeln T."/>
            <person name="Hoheisel J.D."/>
            <person name="Jaeger W."/>
            <person name="Jimenez A."/>
            <person name="Jonniaux J.-L."/>
            <person name="Kraemer C."/>
            <person name="Kuester H."/>
            <person name="Laamanen P."/>
            <person name="Legros Y."/>
            <person name="Louis E.J."/>
            <person name="Moeller-Rieker S."/>
            <person name="Monnet A."/>
            <person name="Moro M."/>
            <person name="Mueller-Auer S."/>
            <person name="Nussbaumer B."/>
            <person name="Paricio N."/>
            <person name="Paulin L."/>
            <person name="Perea J."/>
            <person name="Perez-Alonso M."/>
            <person name="Perez-Ortin J.E."/>
            <person name="Pohl T.M."/>
            <person name="Prydz H."/>
            <person name="Purnelle B."/>
            <person name="Rasmussen S.W."/>
            <person name="Remacha M.A."/>
            <person name="Revuelta J.L."/>
            <person name="Rieger M."/>
            <person name="Salom D."/>
            <person name="Saluz H.P."/>
            <person name="Saiz J.E."/>
            <person name="Saren A.-M."/>
            <person name="Schaefer M."/>
            <person name="Scharfe M."/>
            <person name="Schmidt E.R."/>
            <person name="Schneider C."/>
            <person name="Scholler P."/>
            <person name="Schwarz S."/>
            <person name="Soler-Mira A."/>
            <person name="Urrestarazu L.A."/>
            <person name="Verhasselt P."/>
            <person name="Vissers S."/>
            <person name="Voet M."/>
            <person name="Volckaert G."/>
            <person name="Wagner G."/>
            <person name="Wambutt R."/>
            <person name="Wedler E."/>
            <person name="Wedler H."/>
            <person name="Woelfl S."/>
            <person name="Harris D.E."/>
            <person name="Bowman S."/>
            <person name="Brown D."/>
            <person name="Churcher C.M."/>
            <person name="Connor R."/>
            <person name="Dedman K."/>
            <person name="Gentles S."/>
            <person name="Hamlin N."/>
            <person name="Hunt S."/>
            <person name="Jones L."/>
            <person name="McDonald S."/>
            <person name="Murphy L.D."/>
            <person name="Niblett D."/>
            <person name="Odell C."/>
            <person name="Oliver K."/>
            <person name="Rajandream M.A."/>
            <person name="Richards C."/>
            <person name="Shore L."/>
            <person name="Walsh S.V."/>
            <person name="Barrell B.G."/>
            <person name="Dietrich F.S."/>
            <person name="Mulligan J.T."/>
            <person name="Allen E."/>
            <person name="Araujo R."/>
            <person name="Aviles E."/>
            <person name="Berno A."/>
            <person name="Carpenter J."/>
            <person name="Chen E."/>
            <person name="Cherry J.M."/>
            <person name="Chung E."/>
            <person name="Duncan M."/>
            <person name="Hunicke-Smith S."/>
            <person name="Hyman R.W."/>
            <person name="Komp C."/>
            <person name="Lashkari D."/>
            <person name="Lew H."/>
            <person name="Lin D."/>
            <person name="Mosedale D."/>
            <person name="Nakahara K."/>
            <person name="Namath A."/>
            <person name="Oefner P."/>
            <person name="Oh C."/>
            <person name="Petel F.X."/>
            <person name="Roberts D."/>
            <person name="Schramm S."/>
            <person name="Schroeder M."/>
            <person name="Shogren T."/>
            <person name="Shroff N."/>
            <person name="Winant A."/>
            <person name="Yelton M.A."/>
            <person name="Botstein D."/>
            <person name="Davis R.W."/>
            <person name="Johnston M."/>
            <person name="Andrews S."/>
            <person name="Brinkman R."/>
            <person name="Cooper J."/>
            <person name="Ding H."/>
            <person name="Du Z."/>
            <person name="Favello A."/>
            <person name="Fulton L."/>
            <person name="Gattung S."/>
            <person name="Greco T."/>
            <person name="Hallsworth K."/>
            <person name="Hawkins J."/>
            <person name="Hillier L.W."/>
            <person name="Jier M."/>
            <person name="Johnson D."/>
            <person name="Johnston L."/>
            <person name="Kirsten J."/>
            <person name="Kucaba T."/>
            <person name="Langston Y."/>
            <person name="Latreille P."/>
            <person name="Le T."/>
            <person name="Mardis E."/>
            <person name="Menezes S."/>
            <person name="Miller N."/>
            <person name="Nhan M."/>
            <person name="Pauley A."/>
            <person name="Peluso D."/>
            <person name="Rifkin L."/>
            <person name="Riles L."/>
            <person name="Taich A."/>
            <person name="Trevaskis E."/>
            <person name="Vignati D."/>
            <person name="Wilcox L."/>
            <person name="Wohldman P."/>
            <person name="Vaudin M."/>
            <person name="Wilson R."/>
            <person name="Waterston R."/>
            <person name="Albermann K."/>
            <person name="Hani J."/>
            <person name="Heumann K."/>
            <person name="Kleine K."/>
            <person name="Mewes H.-W."/>
            <person name="Zollner A."/>
            <person name="Zaccaria P."/>
        </authorList>
    </citation>
    <scope>NUCLEOTIDE SEQUENCE [LARGE SCALE GENOMIC DNA]</scope>
    <source>
        <strain>ATCC 204508 / S288c</strain>
    </source>
</reference>
<reference key="2">
    <citation type="journal article" date="2014" name="G3 (Bethesda)">
        <title>The reference genome sequence of Saccharomyces cerevisiae: Then and now.</title>
        <authorList>
            <person name="Engel S.R."/>
            <person name="Dietrich F.S."/>
            <person name="Fisk D.G."/>
            <person name="Binkley G."/>
            <person name="Balakrishnan R."/>
            <person name="Costanzo M.C."/>
            <person name="Dwight S.S."/>
            <person name="Hitz B.C."/>
            <person name="Karra K."/>
            <person name="Nash R.S."/>
            <person name="Weng S."/>
            <person name="Wong E.D."/>
            <person name="Lloyd P."/>
            <person name="Skrzypek M.S."/>
            <person name="Miyasato S.R."/>
            <person name="Simison M."/>
            <person name="Cherry J.M."/>
        </authorList>
    </citation>
    <scope>GENOME REANNOTATION</scope>
    <source>
        <strain>ATCC 204508 / S288c</strain>
    </source>
</reference>
<reference key="3">
    <citation type="journal article" date="1998" name="Genome Res.">
        <title>Transposable elements and genome organization: a comprehensive survey of retrotransposons revealed by the complete Saccharomyces cerevisiae genome sequence.</title>
        <authorList>
            <person name="Kim J.M."/>
            <person name="Vanguri S."/>
            <person name="Boeke J.D."/>
            <person name="Gabriel A."/>
            <person name="Voytas D.F."/>
        </authorList>
    </citation>
    <scope>NOMENCLATURE</scope>
</reference>
<reference key="4">
    <citation type="journal article" date="2005" name="Cytogenet. Genome Res.">
        <title>Happy together: the life and times of Ty retrotransposons and their hosts.</title>
        <authorList>
            <person name="Lesage P."/>
            <person name="Todeschini A.L."/>
        </authorList>
    </citation>
    <scope>REVIEW</scope>
</reference>
<reference key="5">
    <citation type="journal article" date="2005" name="Cytogenet. Genome Res.">
        <title>Reverse transcriptase and integrase of the Saccharomyces cerevisiae Ty1 element.</title>
        <authorList>
            <person name="Wilhelm F.-X."/>
            <person name="Wilhelm M."/>
            <person name="Gabriel A."/>
        </authorList>
    </citation>
    <scope>REVIEW</scope>
    <scope>DOMAINS</scope>
</reference>
<name>YD15B_YEAST</name>
<proteinExistence type="inferred from homology"/>
<gene>
    <name type="primary">TY1B-DR6</name>
    <name type="synonym">YDRWTy1-5 POL</name>
    <name type="ordered locus">YDR365W-B</name>
    <name type="ORF">D9481.12</name>
</gene>